<comment type="function">
    <text evidence="1">Required for maturation of 30S ribosomal subunits.</text>
</comment>
<comment type="subcellular location">
    <subcellularLocation>
        <location evidence="1">Cytoplasm</location>
    </subcellularLocation>
</comment>
<comment type="similarity">
    <text evidence="1">Belongs to the RimP family.</text>
</comment>
<keyword id="KW-0963">Cytoplasm</keyword>
<keyword id="KW-0690">Ribosome biogenesis</keyword>
<feature type="chain" id="PRO_1000136731" description="Ribosome maturation factor RimP">
    <location>
        <begin position="1"/>
        <end position="156"/>
    </location>
</feature>
<dbReference type="EMBL" id="CP001186">
    <property type="protein sequence ID" value="ACK93367.1"/>
    <property type="molecule type" value="Genomic_DNA"/>
</dbReference>
<dbReference type="RefSeq" id="WP_000359095.1">
    <property type="nucleotide sequence ID" value="NC_011772.1"/>
</dbReference>
<dbReference type="SMR" id="B7IUH5"/>
<dbReference type="GeneID" id="87592518"/>
<dbReference type="KEGG" id="bcg:BCG9842_B1329"/>
<dbReference type="HOGENOM" id="CLU_070525_2_0_9"/>
<dbReference type="Proteomes" id="UP000006744">
    <property type="component" value="Chromosome"/>
</dbReference>
<dbReference type="GO" id="GO:0005829">
    <property type="term" value="C:cytosol"/>
    <property type="evidence" value="ECO:0007669"/>
    <property type="project" value="TreeGrafter"/>
</dbReference>
<dbReference type="GO" id="GO:0000028">
    <property type="term" value="P:ribosomal small subunit assembly"/>
    <property type="evidence" value="ECO:0007669"/>
    <property type="project" value="TreeGrafter"/>
</dbReference>
<dbReference type="GO" id="GO:0006412">
    <property type="term" value="P:translation"/>
    <property type="evidence" value="ECO:0007669"/>
    <property type="project" value="TreeGrafter"/>
</dbReference>
<dbReference type="CDD" id="cd01734">
    <property type="entry name" value="YlxS_C"/>
    <property type="match status" value="1"/>
</dbReference>
<dbReference type="FunFam" id="2.30.30.180:FF:000002">
    <property type="entry name" value="Ribosome maturation factor RimP"/>
    <property type="match status" value="1"/>
</dbReference>
<dbReference type="FunFam" id="3.30.300.70:FF:000001">
    <property type="entry name" value="Ribosome maturation factor RimP"/>
    <property type="match status" value="1"/>
</dbReference>
<dbReference type="Gene3D" id="2.30.30.180">
    <property type="entry name" value="Ribosome maturation factor RimP, C-terminal domain"/>
    <property type="match status" value="1"/>
</dbReference>
<dbReference type="Gene3D" id="3.30.300.70">
    <property type="entry name" value="RimP-like superfamily, N-terminal"/>
    <property type="match status" value="1"/>
</dbReference>
<dbReference type="HAMAP" id="MF_01077">
    <property type="entry name" value="RimP"/>
    <property type="match status" value="1"/>
</dbReference>
<dbReference type="InterPro" id="IPR003728">
    <property type="entry name" value="Ribosome_maturation_RimP"/>
</dbReference>
<dbReference type="InterPro" id="IPR028998">
    <property type="entry name" value="RimP_C"/>
</dbReference>
<dbReference type="InterPro" id="IPR036847">
    <property type="entry name" value="RimP_C_sf"/>
</dbReference>
<dbReference type="InterPro" id="IPR028989">
    <property type="entry name" value="RimP_N"/>
</dbReference>
<dbReference type="InterPro" id="IPR035956">
    <property type="entry name" value="RimP_N_sf"/>
</dbReference>
<dbReference type="NCBIfam" id="NF000928">
    <property type="entry name" value="PRK00092.1-2"/>
    <property type="match status" value="1"/>
</dbReference>
<dbReference type="PANTHER" id="PTHR33867">
    <property type="entry name" value="RIBOSOME MATURATION FACTOR RIMP"/>
    <property type="match status" value="1"/>
</dbReference>
<dbReference type="PANTHER" id="PTHR33867:SF1">
    <property type="entry name" value="RIBOSOME MATURATION FACTOR RIMP"/>
    <property type="match status" value="1"/>
</dbReference>
<dbReference type="Pfam" id="PF17384">
    <property type="entry name" value="DUF150_C"/>
    <property type="match status" value="1"/>
</dbReference>
<dbReference type="Pfam" id="PF02576">
    <property type="entry name" value="RimP_N"/>
    <property type="match status" value="1"/>
</dbReference>
<dbReference type="SUPFAM" id="SSF74942">
    <property type="entry name" value="YhbC-like, C-terminal domain"/>
    <property type="match status" value="1"/>
</dbReference>
<dbReference type="SUPFAM" id="SSF75420">
    <property type="entry name" value="YhbC-like, N-terminal domain"/>
    <property type="match status" value="1"/>
</dbReference>
<proteinExistence type="inferred from homology"/>
<organism>
    <name type="scientific">Bacillus cereus (strain G9842)</name>
    <dbReference type="NCBI Taxonomy" id="405531"/>
    <lineage>
        <taxon>Bacteria</taxon>
        <taxon>Bacillati</taxon>
        <taxon>Bacillota</taxon>
        <taxon>Bacilli</taxon>
        <taxon>Bacillales</taxon>
        <taxon>Bacillaceae</taxon>
        <taxon>Bacillus</taxon>
        <taxon>Bacillus cereus group</taxon>
    </lineage>
</organism>
<name>RIMP_BACC2</name>
<reference key="1">
    <citation type="submission" date="2008-10" db="EMBL/GenBank/DDBJ databases">
        <title>Genome sequence of Bacillus cereus G9842.</title>
        <authorList>
            <person name="Dodson R.J."/>
            <person name="Durkin A.S."/>
            <person name="Rosovitz M.J."/>
            <person name="Rasko D.A."/>
            <person name="Hoffmaster A."/>
            <person name="Ravel J."/>
            <person name="Sutton G."/>
        </authorList>
    </citation>
    <scope>NUCLEOTIDE SEQUENCE [LARGE SCALE GENOMIC DNA]</scope>
    <source>
        <strain>G9842</strain>
    </source>
</reference>
<gene>
    <name evidence="1" type="primary">rimP</name>
    <name type="ordered locus">BCG9842_B1329</name>
</gene>
<evidence type="ECO:0000255" key="1">
    <source>
        <dbReference type="HAMAP-Rule" id="MF_01077"/>
    </source>
</evidence>
<sequence>MDKKVTEVVEAFAQPIVEELNLELVDVEYVKEGQDWFLRVFIDSEKGVDIEECGAVSERLSEALDKEDPIPHLYFLDVSSPGAERPLKKEKDFQQAVGKQVAIKTYEPIDGEKMFEGKLLSYDGTTITLLLTIKTRKKEIQIPMDKVANARLAVTF</sequence>
<accession>B7IUH5</accession>
<protein>
    <recommendedName>
        <fullName evidence="1">Ribosome maturation factor RimP</fullName>
    </recommendedName>
</protein>